<name>SYFA_ACIAD</name>
<reference key="1">
    <citation type="journal article" date="2004" name="Nucleic Acids Res.">
        <title>Unique features revealed by the genome sequence of Acinetobacter sp. ADP1, a versatile and naturally transformation competent bacterium.</title>
        <authorList>
            <person name="Barbe V."/>
            <person name="Vallenet D."/>
            <person name="Fonknechten N."/>
            <person name="Kreimeyer A."/>
            <person name="Oztas S."/>
            <person name="Labarre L."/>
            <person name="Cruveiller S."/>
            <person name="Robert C."/>
            <person name="Duprat S."/>
            <person name="Wincker P."/>
            <person name="Ornston L.N."/>
            <person name="Weissenbach J."/>
            <person name="Marliere P."/>
            <person name="Cohen G.N."/>
            <person name="Medigue C."/>
        </authorList>
    </citation>
    <scope>NUCLEOTIDE SEQUENCE [LARGE SCALE GENOMIC DNA]</scope>
    <source>
        <strain>ATCC 33305 / BD413 / ADP1</strain>
    </source>
</reference>
<feature type="chain" id="PRO_0000126654" description="Phenylalanine--tRNA ligase alpha subunit">
    <location>
        <begin position="1"/>
        <end position="330"/>
    </location>
</feature>
<feature type="binding site" evidence="1">
    <location>
        <position position="255"/>
    </location>
    <ligand>
        <name>Mg(2+)</name>
        <dbReference type="ChEBI" id="CHEBI:18420"/>
        <note>shared with beta subunit</note>
    </ligand>
</feature>
<comment type="catalytic activity">
    <reaction evidence="1">
        <text>tRNA(Phe) + L-phenylalanine + ATP = L-phenylalanyl-tRNA(Phe) + AMP + diphosphate + H(+)</text>
        <dbReference type="Rhea" id="RHEA:19413"/>
        <dbReference type="Rhea" id="RHEA-COMP:9668"/>
        <dbReference type="Rhea" id="RHEA-COMP:9699"/>
        <dbReference type="ChEBI" id="CHEBI:15378"/>
        <dbReference type="ChEBI" id="CHEBI:30616"/>
        <dbReference type="ChEBI" id="CHEBI:33019"/>
        <dbReference type="ChEBI" id="CHEBI:58095"/>
        <dbReference type="ChEBI" id="CHEBI:78442"/>
        <dbReference type="ChEBI" id="CHEBI:78531"/>
        <dbReference type="ChEBI" id="CHEBI:456215"/>
        <dbReference type="EC" id="6.1.1.20"/>
    </reaction>
</comment>
<comment type="cofactor">
    <cofactor evidence="1">
        <name>Mg(2+)</name>
        <dbReference type="ChEBI" id="CHEBI:18420"/>
    </cofactor>
    <text evidence="1">Binds 2 magnesium ions per tetramer.</text>
</comment>
<comment type="subunit">
    <text evidence="1">Tetramer of two alpha and two beta subunits.</text>
</comment>
<comment type="subcellular location">
    <subcellularLocation>
        <location evidence="1">Cytoplasm</location>
    </subcellularLocation>
</comment>
<comment type="similarity">
    <text evidence="1">Belongs to the class-II aminoacyl-tRNA synthetase family. Phe-tRNA synthetase alpha subunit type 1 subfamily.</text>
</comment>
<protein>
    <recommendedName>
        <fullName evidence="1">Phenylalanine--tRNA ligase alpha subunit</fullName>
        <ecNumber evidence="1">6.1.1.20</ecNumber>
    </recommendedName>
    <alternativeName>
        <fullName evidence="1">Phenylalanyl-tRNA synthetase alpha subunit</fullName>
        <shortName evidence="1">PheRS</shortName>
    </alternativeName>
</protein>
<keyword id="KW-0030">Aminoacyl-tRNA synthetase</keyword>
<keyword id="KW-0067">ATP-binding</keyword>
<keyword id="KW-0963">Cytoplasm</keyword>
<keyword id="KW-0436">Ligase</keyword>
<keyword id="KW-0460">Magnesium</keyword>
<keyword id="KW-0479">Metal-binding</keyword>
<keyword id="KW-0547">Nucleotide-binding</keyword>
<keyword id="KW-0648">Protein biosynthesis</keyword>
<dbReference type="EC" id="6.1.1.20" evidence="1"/>
<dbReference type="EMBL" id="CR543861">
    <property type="protein sequence ID" value="CAG69743.1"/>
    <property type="molecule type" value="Genomic_DNA"/>
</dbReference>
<dbReference type="SMR" id="Q6F872"/>
<dbReference type="STRING" id="202950.GCA_001485005_02703"/>
<dbReference type="KEGG" id="aci:ACIAD3042"/>
<dbReference type="eggNOG" id="COG0016">
    <property type="taxonomic scope" value="Bacteria"/>
</dbReference>
<dbReference type="HOGENOM" id="CLU_025086_0_1_6"/>
<dbReference type="Proteomes" id="UP000000430">
    <property type="component" value="Chromosome"/>
</dbReference>
<dbReference type="GO" id="GO:0005737">
    <property type="term" value="C:cytoplasm"/>
    <property type="evidence" value="ECO:0007669"/>
    <property type="project" value="UniProtKB-SubCell"/>
</dbReference>
<dbReference type="GO" id="GO:0005524">
    <property type="term" value="F:ATP binding"/>
    <property type="evidence" value="ECO:0007669"/>
    <property type="project" value="UniProtKB-UniRule"/>
</dbReference>
<dbReference type="GO" id="GO:0000287">
    <property type="term" value="F:magnesium ion binding"/>
    <property type="evidence" value="ECO:0007669"/>
    <property type="project" value="UniProtKB-UniRule"/>
</dbReference>
<dbReference type="GO" id="GO:0004826">
    <property type="term" value="F:phenylalanine-tRNA ligase activity"/>
    <property type="evidence" value="ECO:0007669"/>
    <property type="project" value="UniProtKB-UniRule"/>
</dbReference>
<dbReference type="GO" id="GO:0000049">
    <property type="term" value="F:tRNA binding"/>
    <property type="evidence" value="ECO:0007669"/>
    <property type="project" value="InterPro"/>
</dbReference>
<dbReference type="GO" id="GO:0006432">
    <property type="term" value="P:phenylalanyl-tRNA aminoacylation"/>
    <property type="evidence" value="ECO:0007669"/>
    <property type="project" value="UniProtKB-UniRule"/>
</dbReference>
<dbReference type="CDD" id="cd00496">
    <property type="entry name" value="PheRS_alpha_core"/>
    <property type="match status" value="1"/>
</dbReference>
<dbReference type="FunFam" id="3.30.930.10:FF:000003">
    <property type="entry name" value="Phenylalanine--tRNA ligase alpha subunit"/>
    <property type="match status" value="1"/>
</dbReference>
<dbReference type="Gene3D" id="3.30.930.10">
    <property type="entry name" value="Bira Bifunctional Protein, Domain 2"/>
    <property type="match status" value="1"/>
</dbReference>
<dbReference type="HAMAP" id="MF_00281">
    <property type="entry name" value="Phe_tRNA_synth_alpha1"/>
    <property type="match status" value="1"/>
</dbReference>
<dbReference type="InterPro" id="IPR006195">
    <property type="entry name" value="aa-tRNA-synth_II"/>
</dbReference>
<dbReference type="InterPro" id="IPR045864">
    <property type="entry name" value="aa-tRNA-synth_II/BPL/LPL"/>
</dbReference>
<dbReference type="InterPro" id="IPR004529">
    <property type="entry name" value="Phe-tRNA-synth_IIc_asu"/>
</dbReference>
<dbReference type="InterPro" id="IPR004188">
    <property type="entry name" value="Phe-tRNA_ligase_II_N"/>
</dbReference>
<dbReference type="InterPro" id="IPR022911">
    <property type="entry name" value="Phe_tRNA_ligase_alpha1_bac"/>
</dbReference>
<dbReference type="InterPro" id="IPR002319">
    <property type="entry name" value="Phenylalanyl-tRNA_Synthase"/>
</dbReference>
<dbReference type="InterPro" id="IPR010978">
    <property type="entry name" value="tRNA-bd_arm"/>
</dbReference>
<dbReference type="NCBIfam" id="TIGR00468">
    <property type="entry name" value="pheS"/>
    <property type="match status" value="1"/>
</dbReference>
<dbReference type="PANTHER" id="PTHR11538:SF41">
    <property type="entry name" value="PHENYLALANINE--TRNA LIGASE, MITOCHONDRIAL"/>
    <property type="match status" value="1"/>
</dbReference>
<dbReference type="PANTHER" id="PTHR11538">
    <property type="entry name" value="PHENYLALANYL-TRNA SYNTHETASE"/>
    <property type="match status" value="1"/>
</dbReference>
<dbReference type="Pfam" id="PF02912">
    <property type="entry name" value="Phe_tRNA-synt_N"/>
    <property type="match status" value="1"/>
</dbReference>
<dbReference type="Pfam" id="PF01409">
    <property type="entry name" value="tRNA-synt_2d"/>
    <property type="match status" value="1"/>
</dbReference>
<dbReference type="SUPFAM" id="SSF55681">
    <property type="entry name" value="Class II aaRS and biotin synthetases"/>
    <property type="match status" value="1"/>
</dbReference>
<dbReference type="SUPFAM" id="SSF46589">
    <property type="entry name" value="tRNA-binding arm"/>
    <property type="match status" value="1"/>
</dbReference>
<dbReference type="PROSITE" id="PS50862">
    <property type="entry name" value="AA_TRNA_LIGASE_II"/>
    <property type="match status" value="1"/>
</dbReference>
<evidence type="ECO:0000255" key="1">
    <source>
        <dbReference type="HAMAP-Rule" id="MF_00281"/>
    </source>
</evidence>
<accession>Q6F872</accession>
<proteinExistence type="inferred from homology"/>
<gene>
    <name evidence="1" type="primary">pheS</name>
    <name type="ordered locus">ACIAD3042</name>
</gene>
<sequence length="330" mass="37153">MRVTMSLEALTTEALAAIAAAQDLAALDQVRVLFTGKKSQLAEQSKALGKMDPEQRKVQGAAIHAVREAINAALTERQTALQQAALQQKLASETIDITLPGRGQHMGSIHPVTQVQERICQFFTKAGFSVATGPEVEDDYHNFEALNIPGHHPARAMHDTFYFDVNHLLRTHTSGVQIRTMETTQPPIRIVCPGRVYRCDSDQTHSPMFHQIEGLYVAENTSFAELKGLLINLLNEFFEKDLKVRFRPSYFPFTEPSAEVDIMDERGRWLEVLGCGMVHPNVLRAAGIDPEKYKGFAFGLGVERFAMLRYGINDLRMFYQNDVRFLRQFA</sequence>
<organism>
    <name type="scientific">Acinetobacter baylyi (strain ATCC 33305 / BD413 / ADP1)</name>
    <dbReference type="NCBI Taxonomy" id="62977"/>
    <lineage>
        <taxon>Bacteria</taxon>
        <taxon>Pseudomonadati</taxon>
        <taxon>Pseudomonadota</taxon>
        <taxon>Gammaproteobacteria</taxon>
        <taxon>Moraxellales</taxon>
        <taxon>Moraxellaceae</taxon>
        <taxon>Acinetobacter</taxon>
    </lineage>
</organism>